<comment type="function">
    <text evidence="2">Component of the nuclear pore complex (NPC), a complex required for the trafficking across the nuclear envelope. Functions as a scaffolding element in the nuclear phase of the NPC essential for normal nucleocytoplasmic transport of proteins and mRNAs. Involved in the quality control and retention of unspliced mRNAs in the nucleus; in association with TPR, regulates the nuclear export of unspliced mRNA species bearing constitutive transport element (CTE) in a NXF1- and KHDRBS1-independent manner. Mediates TPR anchoring to the nuclear membrane at NPC. The repeat-containing domain may be involved in anchoring other components of the NPC to the pore membrane. Possible DNA-binding subunit of the nuclear pore complex (NPC).</text>
</comment>
<comment type="cofactor">
    <cofactor>
        <name>Zn(2+)</name>
        <dbReference type="ChEBI" id="CHEBI:29105"/>
    </cofactor>
    <text>Binds at least 4 zinc ions per subunit.</text>
</comment>
<comment type="subunit">
    <text evidence="2 3">Part of the nuclear pore complex (NPC) (By similarity). Interacts with TPR (via coiled coil region); the interaction is direct and provides a link between the core structure and the TPR-containing nuclear basket of the nuclear pore complex (NPC) (By similarity). Interacts with HIKESHI (By similarity). Interacts with SENP2. Interacts with XPO5 (By similarity). Interacts with RAN; the interaction occurs in a GTP- and GDP-independent manner (By similarity). Interacts with MCM3AP; this interaction is required for MCM3AP localization at the nuclear pore complex (By similarity). Interacts with MAPK1 (By similarity).</text>
</comment>
<comment type="subcellular location">
    <subcellularLocation>
        <location evidence="5">Nucleus</location>
    </subcellularLocation>
    <subcellularLocation>
        <location>Nucleus membrane</location>
    </subcellularLocation>
    <subcellularLocation>
        <location>Nucleus</location>
        <location>Nuclear pore complex</location>
    </subcellularLocation>
    <subcellularLocation>
        <location evidence="5">Nucleus</location>
        <location evidence="5">Nucleoplasm</location>
    </subcellularLocation>
    <text evidence="1 5">Dissociates from the NPC structure early during prophase of mitosis. Integrated in the newly assembled nuclear envelope of postmitotic cells early in G1 (By similarity). Localized to the nucleoplasmic side of the nuclear pore complex (NPC) core structure, forming a fibrous structure called the nuclear basket. Tightly associated with the nuclear membrane and lamina. Colocalized with NUP98 and TPR to the nuclear basket at the nucleoplasmic side of the NPC. Detected in diffuse and discrete intranuclear foci. Nucleoplasmic in round spermatids. Colocalizes with NUP210L at the caudal extremity in elongating spermatids (PubMed:38129135).</text>
</comment>
<comment type="domain">
    <text evidence="6">Contains FG repeats. FG repeats are interaction sites for karyopherins (importins, exportins) and form probably an affinity gradient, guiding the transport proteins unidirectionally with their cargo through the NPC. FG repeat regions are highly flexible and lack ordered secondary structure. The overall conservation of FG repeats regarding exact sequence, spacing, and repeat unit length is limited.</text>
</comment>
<comment type="similarity">
    <text evidence="6">Belongs to the NUP153 family.</text>
</comment>
<gene>
    <name type="primary">Nup153</name>
</gene>
<sequence>MASEAGGIGGGGGGGKIRTRRCHQGPVKPYQQGRPQHQGILSRVTESVKNIVPGWLQRYFNKSENACSCSPDADEVPPWPENREDEHAIYADENTNTDDGRITPDPAGSNTEEPSTTSTASNYPDVLTRPSLHRSHLNFSVLESPALHCQPSTSSAFPIGSSGFSLVKEIKDSTSQHDDDNISTTSGFSSRASEKDIAVSKNTSLPPLWSPEAERSHSLSQHTAISSKKPAFNLSAFGTLSTSLGNSSILKTSQLGDSPFYPGKTTYGGAAAAVRQNKVRSTPYQAPVRRQMKAKQLNAQSYGVTSSTARRILQSLEKMSSPLADAKRIPSAVSSPLNSPLDRSGIDNTVFQAKKEKVDSQYPPVQRLMTPKPVSIATNRTVYFKPSLTPSGDLRKTNQRIDKKNSTVDEKSISRQNREQESGFSYPNFSIPAANGLSSGVGGGGGKMRRERTHFVAPKPPENEEVEAPLLPQISLPISSSSLPTFSFSSPVTSASPSPVSSSQPLPNKVQMTSLGSTGSPVFTFSSPIVKSTQAAVLPPASIGFTFSVPLAKTEFSGSNSSSETVLSSSAQDITAVNSSSYKKRSAPCEDPFTPAKILREGSVLDILKTPGFASPKVDSPALQPTTTSSIVYTRPAISTFSSSGIEYGESLKAGSSWQCDTCLLQNKVTDNKCIACQAAKLPLKETAKQTGTGTPSKSDKPASTSGTGFGDKFKPAIGTWDCDTCLVQNKPEAVKCVACETPKPGTGVKRALTLTVASESPVTASSSTTVTTGTLGFGDKFKRPVGSWECPVCCVCNKAEDNRCVSCTSEKPGLVSASSSSPAPVSLSSGGCLGLDKFKKPEGSWDCEVCLVQNKADSAKCIACESAKPGTKSEFKGFGTSSSLNPAPSAFKFGIPSSSSGLSQTLTSTGNFKFGDQGGFKLGTSSDSGSTNTMNTNFKFSKPTGDFKFGVLSDSKPEEVKNDNKNDNFQFGSSSGLTNPASSAPFQFGVSTLGQQEKKEELPKSSPAGFSFGAGVNNPPNAAIDTTATSENKSGFNFGTLDTKSVSVTPFTYKTTEAKKEDAPATKGGFTFGKVGSSSLPSSSMFVLGRTEEKQQEPVTSTSLVFGKKADSEEPKCQPVFSFGNSEQTKDESSKPTFSFSVAKPSGKESEQLAKATFAFGNQTNTTTDQGAAKPVFSFLNSSSSSSSAPATSSSGGIFGSSTSSSNPPVAAFVFGQASNPVSSSAFGNAAESSTSQSLLFPQESEPATTSSTAPAASPFVFGTGASSNSVSSGFTFGATTTSSSSGSSFVFGTGHSAPSASPAFGANQTPTFGQSQGASQPNPPSFGSISSSTALFSAGSQPVPPPIFGTVSSSSQPPVFGQQPSQSAFGSGTANASSVFQFGSSTTNFNFTNNNPSGVFTFGASPSTPAASAQPSGSGVFSFSQSPASFTVGSNGKNMFSSSGTSVSGRKIKTAVRRKK</sequence>
<proteinExistence type="evidence at protein level"/>
<keyword id="KW-0238">DNA-binding</keyword>
<keyword id="KW-1017">Isopeptide bond</keyword>
<keyword id="KW-0472">Membrane</keyword>
<keyword id="KW-0479">Metal-binding</keyword>
<keyword id="KW-0509">mRNA transport</keyword>
<keyword id="KW-0906">Nuclear pore complex</keyword>
<keyword id="KW-0539">Nucleus</keyword>
<keyword id="KW-0653">Protein transport</keyword>
<keyword id="KW-1185">Reference proteome</keyword>
<keyword id="KW-0677">Repeat</keyword>
<keyword id="KW-0811">Translocation</keyword>
<keyword id="KW-0813">Transport</keyword>
<keyword id="KW-0832">Ubl conjugation</keyword>
<keyword id="KW-0862">Zinc</keyword>
<keyword id="KW-0863">Zinc-finger</keyword>
<feature type="initiator methionine" description="Removed" evidence="2">
    <location>
        <position position="1"/>
    </location>
</feature>
<feature type="chain" id="PRO_0000462193" description="Nuclear pore complex protein Nup153">
    <location>
        <begin position="2"/>
        <end position="1462"/>
    </location>
</feature>
<feature type="repeat" description="1" evidence="3">
    <location>
        <begin position="237"/>
        <end position="238"/>
    </location>
</feature>
<feature type="repeat" description="2" evidence="3">
    <location>
        <begin position="648"/>
        <end position="649"/>
    </location>
</feature>
<feature type="repeat" description="3" evidence="3">
    <location>
        <begin position="710"/>
        <end position="711"/>
    </location>
</feature>
<feature type="repeat" description="4" evidence="3">
    <location>
        <begin position="778"/>
        <end position="779"/>
    </location>
</feature>
<feature type="repeat" description="5" evidence="3">
    <location>
        <begin position="894"/>
        <end position="895"/>
    </location>
</feature>
<feature type="repeat" description="6" evidence="3">
    <location>
        <begin position="915"/>
        <end position="916"/>
    </location>
</feature>
<feature type="repeat" description="7" evidence="3">
    <location>
        <begin position="950"/>
        <end position="951"/>
    </location>
</feature>
<feature type="repeat" description="8" evidence="3">
    <location>
        <begin position="972"/>
        <end position="973"/>
    </location>
</feature>
<feature type="repeat" description="9" evidence="3">
    <location>
        <begin position="989"/>
        <end position="990"/>
    </location>
</feature>
<feature type="repeat" description="10" evidence="3">
    <location>
        <begin position="1013"/>
        <end position="1014"/>
    </location>
</feature>
<feature type="repeat" description="11" evidence="3">
    <location>
        <begin position="1073"/>
        <end position="1074"/>
    </location>
</feature>
<feature type="repeat" description="12" evidence="3">
    <location>
        <begin position="1107"/>
        <end position="1108"/>
    </location>
</feature>
<feature type="repeat" description="13" evidence="3">
    <location>
        <begin position="1124"/>
        <end position="1125"/>
    </location>
</feature>
<feature type="repeat" description="14" evidence="3">
    <location>
        <begin position="1161"/>
        <end position="1162"/>
    </location>
</feature>
<feature type="repeat" description="15" evidence="3">
    <location>
        <begin position="1200"/>
        <end position="1201"/>
    </location>
</feature>
<feature type="repeat" description="16" evidence="3">
    <location>
        <begin position="1216"/>
        <end position="1217"/>
    </location>
</feature>
<feature type="repeat" description="17" evidence="3">
    <location>
        <begin position="1228"/>
        <end position="1229"/>
    </location>
</feature>
<feature type="repeat" description="18" evidence="3">
    <location>
        <begin position="1263"/>
        <end position="1264"/>
    </location>
</feature>
<feature type="repeat" description="19" evidence="3">
    <location>
        <begin position="1276"/>
        <end position="1277"/>
    </location>
</feature>
<feature type="repeat" description="20" evidence="3">
    <location>
        <begin position="1278"/>
        <end position="1279"/>
    </location>
</feature>
<feature type="repeat" description="21" evidence="3">
    <location>
        <begin position="1293"/>
        <end position="1294"/>
    </location>
</feature>
<feature type="repeat" description="22" evidence="3">
    <location>
        <begin position="1306"/>
        <end position="1307"/>
    </location>
</feature>
<feature type="repeat" description="23" evidence="3">
    <location>
        <begin position="1314"/>
        <end position="1315"/>
    </location>
</feature>
<feature type="repeat" description="24" evidence="3">
    <location>
        <begin position="1328"/>
        <end position="1329"/>
    </location>
</feature>
<feature type="repeat" description="25" evidence="3">
    <location>
        <begin position="1350"/>
        <end position="1351"/>
    </location>
</feature>
<feature type="repeat" description="26" evidence="3">
    <location>
        <begin position="1362"/>
        <end position="1363"/>
    </location>
</feature>
<feature type="repeat" description="27" evidence="3">
    <location>
        <begin position="1371"/>
        <end position="1372"/>
    </location>
</feature>
<feature type="repeat" description="28" evidence="3">
    <location>
        <begin position="1384"/>
        <end position="1385"/>
    </location>
</feature>
<feature type="repeat" description="29" evidence="3">
    <location>
        <begin position="1404"/>
        <end position="1405"/>
    </location>
</feature>
<feature type="zinc finger region" description="RanBP2-type 1" evidence="4">
    <location>
        <begin position="653"/>
        <end position="683"/>
    </location>
</feature>
<feature type="zinc finger region" description="RanBP2-type 2" evidence="4">
    <location>
        <begin position="717"/>
        <end position="746"/>
    </location>
</feature>
<feature type="zinc finger region" description="RanBP2-type 3" evidence="4">
    <location>
        <begin position="785"/>
        <end position="814"/>
    </location>
</feature>
<feature type="zinc finger region" description="RanBP2-type 4" evidence="4">
    <location>
        <begin position="842"/>
        <end position="871"/>
    </location>
</feature>
<feature type="region of interest" description="29 X 2 AA repeats of F-G" evidence="3">
    <location>
        <begin position="237"/>
        <end position="1405"/>
    </location>
</feature>
<feature type="binding site" evidence="4">
    <location>
        <position position="660"/>
    </location>
    <ligand>
        <name>Zn(2+)</name>
        <dbReference type="ChEBI" id="CHEBI:29105"/>
        <label>1</label>
    </ligand>
</feature>
<feature type="binding site" evidence="4">
    <location>
        <position position="663"/>
    </location>
    <ligand>
        <name>Zn(2+)</name>
        <dbReference type="ChEBI" id="CHEBI:29105"/>
        <label>1</label>
    </ligand>
</feature>
<feature type="binding site" evidence="4">
    <location>
        <position position="674"/>
    </location>
    <ligand>
        <name>Zn(2+)</name>
        <dbReference type="ChEBI" id="CHEBI:29105"/>
        <label>1</label>
    </ligand>
</feature>
<feature type="binding site" evidence="4">
    <location>
        <position position="677"/>
    </location>
    <ligand>
        <name>Zn(2+)</name>
        <dbReference type="ChEBI" id="CHEBI:29105"/>
        <label>1</label>
    </ligand>
</feature>
<feature type="binding site" evidence="4">
    <location>
        <position position="723"/>
    </location>
    <ligand>
        <name>Zn(2+)</name>
        <dbReference type="ChEBI" id="CHEBI:29105"/>
        <label>2</label>
    </ligand>
</feature>
<feature type="binding site" evidence="4">
    <location>
        <position position="726"/>
    </location>
    <ligand>
        <name>Zn(2+)</name>
        <dbReference type="ChEBI" id="CHEBI:29105"/>
        <label>2</label>
    </ligand>
</feature>
<feature type="binding site" evidence="4">
    <location>
        <position position="737"/>
    </location>
    <ligand>
        <name>Zn(2+)</name>
        <dbReference type="ChEBI" id="CHEBI:29105"/>
        <label>2</label>
    </ligand>
</feature>
<feature type="binding site" evidence="4">
    <location>
        <position position="740"/>
    </location>
    <ligand>
        <name>Zn(2+)</name>
        <dbReference type="ChEBI" id="CHEBI:29105"/>
        <label>2</label>
    </ligand>
</feature>
<feature type="binding site" evidence="4">
    <location>
        <position position="791"/>
    </location>
    <ligand>
        <name>Zn(2+)</name>
        <dbReference type="ChEBI" id="CHEBI:29105"/>
        <label>3</label>
    </ligand>
</feature>
<feature type="binding site" evidence="4">
    <location>
        <position position="794"/>
    </location>
    <ligand>
        <name>Zn(2+)</name>
        <dbReference type="ChEBI" id="CHEBI:29105"/>
        <label>3</label>
    </ligand>
</feature>
<feature type="binding site" evidence="4">
    <location>
        <position position="805"/>
    </location>
    <ligand>
        <name>Zn(2+)</name>
        <dbReference type="ChEBI" id="CHEBI:29105"/>
        <label>3</label>
    </ligand>
</feature>
<feature type="binding site" evidence="4">
    <location>
        <position position="808"/>
    </location>
    <ligand>
        <name>Zn(2+)</name>
        <dbReference type="ChEBI" id="CHEBI:29105"/>
        <label>3</label>
    </ligand>
</feature>
<feature type="binding site" evidence="4">
    <location>
        <position position="848"/>
    </location>
    <ligand>
        <name>Zn(2+)</name>
        <dbReference type="ChEBI" id="CHEBI:29105"/>
        <label>4</label>
    </ligand>
</feature>
<feature type="binding site" evidence="4">
    <location>
        <position position="851"/>
    </location>
    <ligand>
        <name>Zn(2+)</name>
        <dbReference type="ChEBI" id="CHEBI:29105"/>
        <label>4</label>
    </ligand>
</feature>
<feature type="binding site" evidence="4">
    <location>
        <position position="862"/>
    </location>
    <ligand>
        <name>Zn(2+)</name>
        <dbReference type="ChEBI" id="CHEBI:29105"/>
        <label>4</label>
    </ligand>
</feature>
<feature type="binding site" evidence="4">
    <location>
        <position position="865"/>
    </location>
    <ligand>
        <name>Zn(2+)</name>
        <dbReference type="ChEBI" id="CHEBI:29105"/>
        <label>4</label>
    </ligand>
</feature>
<feature type="cross-link" description="Glycyl lysine isopeptide (Lys-Gly) (interchain with G-Cter in SUMO2)" evidence="2">
    <location>
        <position position="354"/>
    </location>
</feature>
<evidence type="ECO:0000250" key="1"/>
<evidence type="ECO:0000250" key="2">
    <source>
        <dbReference type="UniProtKB" id="P49790"/>
    </source>
</evidence>
<evidence type="ECO:0000250" key="3">
    <source>
        <dbReference type="UniProtKB" id="P49791"/>
    </source>
</evidence>
<evidence type="ECO:0000255" key="4">
    <source>
        <dbReference type="PROSITE-ProRule" id="PRU00322"/>
    </source>
</evidence>
<evidence type="ECO:0000269" key="5">
    <source>
    </source>
</evidence>
<evidence type="ECO:0000305" key="6"/>
<evidence type="ECO:0000312" key="7">
    <source>
        <dbReference type="Proteomes" id="UP000000589"/>
    </source>
</evidence>
<evidence type="ECO:0007744" key="8">
    <source>
    </source>
</evidence>
<evidence type="ECO:0007744" key="9">
    <source>
    </source>
</evidence>
<name>NU153_MOUSE</name>
<reference key="1">
    <citation type="journal article" date="2009" name="PLoS Biol.">
        <title>Lineage-specific biology revealed by a finished genome assembly of the mouse.</title>
        <authorList>
            <person name="Church D.M."/>
            <person name="Goodstadt L."/>
            <person name="Hillier L.W."/>
            <person name="Zody M.C."/>
            <person name="Goldstein S."/>
            <person name="She X."/>
            <person name="Bult C.J."/>
            <person name="Agarwala R."/>
            <person name="Cherry J.L."/>
            <person name="DiCuccio M."/>
            <person name="Hlavina W."/>
            <person name="Kapustin Y."/>
            <person name="Meric P."/>
            <person name="Maglott D."/>
            <person name="Birtle Z."/>
            <person name="Marques A.C."/>
            <person name="Graves T."/>
            <person name="Zhou S."/>
            <person name="Teague B."/>
            <person name="Potamousis K."/>
            <person name="Churas C."/>
            <person name="Place M."/>
            <person name="Herschleb J."/>
            <person name="Runnheim R."/>
            <person name="Forrest D."/>
            <person name="Amos-Landgraf J."/>
            <person name="Schwartz D.C."/>
            <person name="Cheng Z."/>
            <person name="Lindblad-Toh K."/>
            <person name="Eichler E.E."/>
            <person name="Ponting C.P."/>
        </authorList>
    </citation>
    <scope>NUCLEOTIDE SEQUENCE [LARGE SCALE GENOMIC DNA]</scope>
    <source>
        <strain>C57BL/6J</strain>
    </source>
</reference>
<reference evidence="8" key="2">
    <citation type="journal article" date="2007" name="Proc. Natl. Acad. Sci. U.S.A.">
        <title>Large-scale phosphorylation analysis of mouse liver.</title>
        <authorList>
            <person name="Villen J."/>
            <person name="Beausoleil S.A."/>
            <person name="Gerber S.A."/>
            <person name="Gygi S.P."/>
        </authorList>
    </citation>
    <scope>IDENTIFICATION BY MASS SPECTROMETRY [LARGE SCALE ANALYSIS]</scope>
</reference>
<reference evidence="9" key="3">
    <citation type="journal article" date="2009" name="Immunity">
        <title>The phagosomal proteome in interferon-gamma-activated macrophages.</title>
        <authorList>
            <person name="Trost M."/>
            <person name="English L."/>
            <person name="Lemieux S."/>
            <person name="Courcelles M."/>
            <person name="Desjardins M."/>
            <person name="Thibault P."/>
        </authorList>
    </citation>
    <scope>IDENTIFICATION BY MASS SPECTROMETRY [LARGE SCALE ANALYSIS]</scope>
</reference>
<reference key="4">
    <citation type="journal article" date="2010" name="Cell">
        <title>A tissue-specific atlas of mouse protein phosphorylation and expression.</title>
        <authorList>
            <person name="Huttlin E.L."/>
            <person name="Jedrychowski M.P."/>
            <person name="Elias J.E."/>
            <person name="Goswami T."/>
            <person name="Rad R."/>
            <person name="Beausoleil S.A."/>
            <person name="Villen J."/>
            <person name="Haas W."/>
            <person name="Sowa M.E."/>
            <person name="Gygi S.P."/>
        </authorList>
    </citation>
    <scope>IDENTIFICATION BY MASS SPECTROMETRY [LARGE SCALE ANALYSIS]</scope>
</reference>
<reference key="5">
    <citation type="journal article" date="2013" name="Mol. Cell">
        <title>SIRT5-mediated lysine desuccinylation impacts diverse metabolic pathways.</title>
        <authorList>
            <person name="Park J."/>
            <person name="Chen Y."/>
            <person name="Tishkoff D.X."/>
            <person name="Peng C."/>
            <person name="Tan M."/>
            <person name="Dai L."/>
            <person name="Xie Z."/>
            <person name="Zhang Y."/>
            <person name="Zwaans B.M."/>
            <person name="Skinner M.E."/>
            <person name="Lombard D.B."/>
            <person name="Zhao Y."/>
        </authorList>
    </citation>
    <scope>IDENTIFICATION BY MASS SPECTROMETRY [LARGE SCALE ANALYSIS]</scope>
</reference>
<reference key="6">
    <citation type="journal article" date="2024" name="Clin. Genet.">
        <title>Spermatozoa in mice lacking the nucleoporin NUP210L show defects in head shape and motility but not in nuclear compaction or histone replacement.</title>
        <authorList>
            <person name="Al Dala Ali M."/>
            <person name="Longepied G."/>
            <person name="Nicolet A."/>
            <person name="Metzler-Guillemain C."/>
            <person name="Mitchell M.J."/>
        </authorList>
    </citation>
    <scope>SUBCELLULAR LOCATION</scope>
</reference>
<dbReference type="EMBL" id="MU069432">
    <property type="status" value="NOT_ANNOTATED_CDS"/>
    <property type="molecule type" value="Genomic_DNA"/>
</dbReference>
<dbReference type="RefSeq" id="NP_786925.2">
    <property type="nucleotide sequence ID" value="NM_175749.2"/>
</dbReference>
<dbReference type="SMR" id="E9Q3G8"/>
<dbReference type="ComplexPortal" id="CPX-4474">
    <property type="entry name" value="Nuclear pore complex"/>
</dbReference>
<dbReference type="FunCoup" id="E9Q3G8">
    <property type="interactions" value="4089"/>
</dbReference>
<dbReference type="IntAct" id="E9Q3G8">
    <property type="interactions" value="2"/>
</dbReference>
<dbReference type="STRING" id="10090.ENSMUSP00000021803"/>
<dbReference type="GlyGen" id="E9Q3G8">
    <property type="glycosylation" value="16 sites, 1 O-linked glycan (15 sites)"/>
</dbReference>
<dbReference type="iPTMnet" id="E9Q3G8"/>
<dbReference type="SwissPalm" id="E9Q3G8"/>
<dbReference type="PaxDb" id="10090-ENSMUSP00000021803"/>
<dbReference type="PeptideAtlas" id="E9Q3G8"/>
<dbReference type="ProteomicsDB" id="359025"/>
<dbReference type="Antibodypedia" id="10334">
    <property type="antibodies" value="185 antibodies from 35 providers"/>
</dbReference>
<dbReference type="DNASU" id="218210"/>
<dbReference type="Ensembl" id="ENSMUST00000021803.10">
    <property type="protein sequence ID" value="ENSMUSP00000021803.9"/>
    <property type="gene ID" value="ENSMUSG00000021374.11"/>
</dbReference>
<dbReference type="GeneID" id="218210"/>
<dbReference type="KEGG" id="mmu:218210"/>
<dbReference type="UCSC" id="uc007qhj.2">
    <property type="organism name" value="mouse"/>
</dbReference>
<dbReference type="AGR" id="MGI:2385621"/>
<dbReference type="CTD" id="9972"/>
<dbReference type="MGI" id="MGI:2385621">
    <property type="gene designation" value="Nup153"/>
</dbReference>
<dbReference type="VEuPathDB" id="HostDB:ENSMUSG00000021374"/>
<dbReference type="eggNOG" id="KOG4719">
    <property type="taxonomic scope" value="Eukaryota"/>
</dbReference>
<dbReference type="GeneTree" id="ENSGT00940000153253"/>
<dbReference type="HOGENOM" id="CLU_004629_1_0_1"/>
<dbReference type="InParanoid" id="E9Q3G8"/>
<dbReference type="OMA" id="SASEWEC"/>
<dbReference type="OrthoDB" id="2920135at2759"/>
<dbReference type="PhylomeDB" id="E9Q3G8"/>
<dbReference type="TreeFam" id="TF323517"/>
<dbReference type="Reactome" id="R-MMU-159227">
    <property type="pathway name" value="Transport of the SLBP independent Mature mRNA"/>
</dbReference>
<dbReference type="Reactome" id="R-MMU-159230">
    <property type="pathway name" value="Transport of the SLBP Dependant Mature mRNA"/>
</dbReference>
<dbReference type="Reactome" id="R-MMU-159231">
    <property type="pathway name" value="Transport of Mature mRNA Derived from an Intronless Transcript"/>
</dbReference>
<dbReference type="Reactome" id="R-MMU-159236">
    <property type="pathway name" value="Transport of Mature mRNA derived from an Intron-Containing Transcript"/>
</dbReference>
<dbReference type="Reactome" id="R-MMU-170822">
    <property type="pathway name" value="Regulation of Glucokinase by Glucokinase Regulatory Protein"/>
</dbReference>
<dbReference type="Reactome" id="R-MMU-191859">
    <property type="pathway name" value="snRNP Assembly"/>
</dbReference>
<dbReference type="Reactome" id="R-MMU-3108214">
    <property type="pathway name" value="SUMOylation of DNA damage response and repair proteins"/>
</dbReference>
<dbReference type="Reactome" id="R-MMU-3232142">
    <property type="pathway name" value="SUMOylation of ubiquitinylation proteins"/>
</dbReference>
<dbReference type="Reactome" id="R-MMU-3301854">
    <property type="pathway name" value="Nuclear Pore Complex (NPC) Disassembly"/>
</dbReference>
<dbReference type="Reactome" id="R-MMU-3371453">
    <property type="pathway name" value="Regulation of HSF1-mediated heat shock response"/>
</dbReference>
<dbReference type="Reactome" id="R-MMU-4085377">
    <property type="pathway name" value="SUMOylation of SUMOylation proteins"/>
</dbReference>
<dbReference type="Reactome" id="R-MMU-4551638">
    <property type="pathway name" value="SUMOylation of chromatin organization proteins"/>
</dbReference>
<dbReference type="Reactome" id="R-MMU-4570464">
    <property type="pathway name" value="SUMOylation of RNA binding proteins"/>
</dbReference>
<dbReference type="Reactome" id="R-MMU-4615885">
    <property type="pathway name" value="SUMOylation of DNA replication proteins"/>
</dbReference>
<dbReference type="Reactome" id="R-MMU-5578749">
    <property type="pathway name" value="Transcriptional regulation by small RNAs"/>
</dbReference>
<dbReference type="BioGRID-ORCS" id="218210">
    <property type="hits" value="20 hits in 78 CRISPR screens"/>
</dbReference>
<dbReference type="ChiTaRS" id="Nup153">
    <property type="organism name" value="mouse"/>
</dbReference>
<dbReference type="Proteomes" id="UP000000589">
    <property type="component" value="Chromosome 13"/>
</dbReference>
<dbReference type="RNAct" id="E9Q3G8">
    <property type="molecule type" value="protein"/>
</dbReference>
<dbReference type="Bgee" id="ENSMUSG00000021374">
    <property type="expression patterns" value="Expressed in embryonic post-anal tail and 239 other cell types or tissues"/>
</dbReference>
<dbReference type="ExpressionAtlas" id="E9Q3G8">
    <property type="expression patterns" value="baseline and differential"/>
</dbReference>
<dbReference type="GO" id="GO:0005829">
    <property type="term" value="C:cytosol"/>
    <property type="evidence" value="ECO:0007669"/>
    <property type="project" value="Ensembl"/>
</dbReference>
<dbReference type="GO" id="GO:0005635">
    <property type="term" value="C:nuclear envelope"/>
    <property type="evidence" value="ECO:0000266"/>
    <property type="project" value="ComplexPortal"/>
</dbReference>
<dbReference type="GO" id="GO:0042405">
    <property type="term" value="C:nuclear inclusion body"/>
    <property type="evidence" value="ECO:0007669"/>
    <property type="project" value="Ensembl"/>
</dbReference>
<dbReference type="GO" id="GO:0031965">
    <property type="term" value="C:nuclear membrane"/>
    <property type="evidence" value="ECO:0007669"/>
    <property type="project" value="Ensembl"/>
</dbReference>
<dbReference type="GO" id="GO:0034399">
    <property type="term" value="C:nuclear periphery"/>
    <property type="evidence" value="ECO:0007669"/>
    <property type="project" value="Ensembl"/>
</dbReference>
<dbReference type="GO" id="GO:0005643">
    <property type="term" value="C:nuclear pore"/>
    <property type="evidence" value="ECO:0000303"/>
    <property type="project" value="ComplexPortal"/>
</dbReference>
<dbReference type="GO" id="GO:0044615">
    <property type="term" value="C:nuclear pore nuclear basket"/>
    <property type="evidence" value="ECO:0007669"/>
    <property type="project" value="Ensembl"/>
</dbReference>
<dbReference type="GO" id="GO:0005730">
    <property type="term" value="C:nucleolus"/>
    <property type="evidence" value="ECO:0007669"/>
    <property type="project" value="Ensembl"/>
</dbReference>
<dbReference type="GO" id="GO:0005654">
    <property type="term" value="C:nucleoplasm"/>
    <property type="evidence" value="ECO:0007669"/>
    <property type="project" value="Ensembl"/>
</dbReference>
<dbReference type="GO" id="GO:0042802">
    <property type="term" value="F:identical protein binding"/>
    <property type="evidence" value="ECO:0007669"/>
    <property type="project" value="Ensembl"/>
</dbReference>
<dbReference type="GO" id="GO:0140693">
    <property type="term" value="F:molecular condensate scaffold activity"/>
    <property type="evidence" value="ECO:0007669"/>
    <property type="project" value="Ensembl"/>
</dbReference>
<dbReference type="GO" id="GO:0043495">
    <property type="term" value="F:protein-membrane adaptor activity"/>
    <property type="evidence" value="ECO:0007669"/>
    <property type="project" value="Ensembl"/>
</dbReference>
<dbReference type="GO" id="GO:0017056">
    <property type="term" value="F:structural constituent of nuclear pore"/>
    <property type="evidence" value="ECO:0007669"/>
    <property type="project" value="Ensembl"/>
</dbReference>
<dbReference type="GO" id="GO:0008270">
    <property type="term" value="F:zinc ion binding"/>
    <property type="evidence" value="ECO:0007669"/>
    <property type="project" value="UniProtKB-KW"/>
</dbReference>
<dbReference type="GO" id="GO:1990000">
    <property type="term" value="P:amyloid fibril formation"/>
    <property type="evidence" value="ECO:0007669"/>
    <property type="project" value="Ensembl"/>
</dbReference>
<dbReference type="GO" id="GO:0046832">
    <property type="term" value="P:negative regulation of RNA export from nucleus"/>
    <property type="evidence" value="ECO:0007669"/>
    <property type="project" value="Ensembl"/>
</dbReference>
<dbReference type="GO" id="GO:0051292">
    <property type="term" value="P:nuclear pore complex assembly"/>
    <property type="evidence" value="ECO:0007669"/>
    <property type="project" value="Ensembl"/>
</dbReference>
<dbReference type="GO" id="GO:0006913">
    <property type="term" value="P:nucleocytoplasmic transport"/>
    <property type="evidence" value="ECO:0000303"/>
    <property type="project" value="ComplexPortal"/>
</dbReference>
<dbReference type="FunFam" id="4.10.1060.10:FF:000001">
    <property type="entry name" value="Nuclear pore complex protein Nup153"/>
    <property type="match status" value="3"/>
</dbReference>
<dbReference type="FunFam" id="4.10.1060.10:FF:000015">
    <property type="entry name" value="Nuclear pore complex protein Nup153"/>
    <property type="match status" value="1"/>
</dbReference>
<dbReference type="Gene3D" id="4.10.1060.10">
    <property type="entry name" value="Zinc finger, RanBP2-type"/>
    <property type="match status" value="4"/>
</dbReference>
<dbReference type="InterPro" id="IPR026054">
    <property type="entry name" value="Nucleoporin"/>
</dbReference>
<dbReference type="InterPro" id="IPR013913">
    <property type="entry name" value="Nup153_N"/>
</dbReference>
<dbReference type="InterPro" id="IPR018892">
    <property type="entry name" value="Retro-transposon_transp_CS"/>
</dbReference>
<dbReference type="InterPro" id="IPR001876">
    <property type="entry name" value="Znf_RanBP2"/>
</dbReference>
<dbReference type="InterPro" id="IPR036443">
    <property type="entry name" value="Znf_RanBP2_sf"/>
</dbReference>
<dbReference type="PANTHER" id="PTHR23193">
    <property type="entry name" value="NUCLEAR PORE COMPLEX PROTEIN NUP"/>
    <property type="match status" value="1"/>
</dbReference>
<dbReference type="PANTHER" id="PTHR23193:SF23">
    <property type="entry name" value="NUCLEAR PORE COMPLEX PROTEIN NUP153"/>
    <property type="match status" value="1"/>
</dbReference>
<dbReference type="Pfam" id="PF08604">
    <property type="entry name" value="Nup153"/>
    <property type="match status" value="1"/>
</dbReference>
<dbReference type="Pfam" id="PF10599">
    <property type="entry name" value="Nup_retrotrp_bd"/>
    <property type="match status" value="1"/>
</dbReference>
<dbReference type="Pfam" id="PF00641">
    <property type="entry name" value="Zn_ribbon_RanBP"/>
    <property type="match status" value="4"/>
</dbReference>
<dbReference type="SMART" id="SM00547">
    <property type="entry name" value="ZnF_RBZ"/>
    <property type="match status" value="4"/>
</dbReference>
<dbReference type="SUPFAM" id="SSF90209">
    <property type="entry name" value="Ran binding protein zinc finger-like"/>
    <property type="match status" value="3"/>
</dbReference>
<dbReference type="PROSITE" id="PS01358">
    <property type="entry name" value="ZF_RANBP2_1"/>
    <property type="match status" value="4"/>
</dbReference>
<dbReference type="PROSITE" id="PS50199">
    <property type="entry name" value="ZF_RANBP2_2"/>
    <property type="match status" value="4"/>
</dbReference>
<organism evidence="7">
    <name type="scientific">Mus musculus</name>
    <name type="common">Mouse</name>
    <dbReference type="NCBI Taxonomy" id="10090"/>
    <lineage>
        <taxon>Eukaryota</taxon>
        <taxon>Metazoa</taxon>
        <taxon>Chordata</taxon>
        <taxon>Craniata</taxon>
        <taxon>Vertebrata</taxon>
        <taxon>Euteleostomi</taxon>
        <taxon>Mammalia</taxon>
        <taxon>Eutheria</taxon>
        <taxon>Euarchontoglires</taxon>
        <taxon>Glires</taxon>
        <taxon>Rodentia</taxon>
        <taxon>Myomorpha</taxon>
        <taxon>Muroidea</taxon>
        <taxon>Muridae</taxon>
        <taxon>Murinae</taxon>
        <taxon>Mus</taxon>
        <taxon>Mus</taxon>
    </lineage>
</organism>
<protein>
    <recommendedName>
        <fullName>Nuclear pore complex protein Nup153</fullName>
    </recommendedName>
    <alternativeName>
        <fullName>153 kDa nucleoporin</fullName>
    </alternativeName>
    <alternativeName>
        <fullName>Nucleoporin Nup153</fullName>
    </alternativeName>
</protein>
<accession>E9Q3G8</accession>